<accession>Q48EC9</accession>
<reference key="1">
    <citation type="journal article" date="2005" name="J. Bacteriol.">
        <title>Whole-genome sequence analysis of Pseudomonas syringae pv. phaseolicola 1448A reveals divergence among pathovars in genes involved in virulence and transposition.</title>
        <authorList>
            <person name="Joardar V."/>
            <person name="Lindeberg M."/>
            <person name="Jackson R.W."/>
            <person name="Selengut J."/>
            <person name="Dodson R."/>
            <person name="Brinkac L.M."/>
            <person name="Daugherty S.C."/>
            <person name="DeBoy R.T."/>
            <person name="Durkin A.S."/>
            <person name="Gwinn Giglio M."/>
            <person name="Madupu R."/>
            <person name="Nelson W.C."/>
            <person name="Rosovitz M.J."/>
            <person name="Sullivan S.A."/>
            <person name="Crabtree J."/>
            <person name="Creasy T."/>
            <person name="Davidsen T.M."/>
            <person name="Haft D.H."/>
            <person name="Zafar N."/>
            <person name="Zhou L."/>
            <person name="Halpin R."/>
            <person name="Holley T."/>
            <person name="Khouri H.M."/>
            <person name="Feldblyum T.V."/>
            <person name="White O."/>
            <person name="Fraser C.M."/>
            <person name="Chatterjee A.K."/>
            <person name="Cartinhour S."/>
            <person name="Schneider D."/>
            <person name="Mansfield J.W."/>
            <person name="Collmer A."/>
            <person name="Buell R."/>
        </authorList>
    </citation>
    <scope>NUCLEOTIDE SEQUENCE [LARGE SCALE GENOMIC DNA]</scope>
    <source>
        <strain>1448A / Race 6</strain>
    </source>
</reference>
<comment type="function">
    <text evidence="1">Catalyzes the sequential NAD-dependent oxidations of L-histidinol to L-histidinaldehyde and then to L-histidine.</text>
</comment>
<comment type="catalytic activity">
    <reaction evidence="1">
        <text>L-histidinol + 2 NAD(+) + H2O = L-histidine + 2 NADH + 3 H(+)</text>
        <dbReference type="Rhea" id="RHEA:20641"/>
        <dbReference type="ChEBI" id="CHEBI:15377"/>
        <dbReference type="ChEBI" id="CHEBI:15378"/>
        <dbReference type="ChEBI" id="CHEBI:57540"/>
        <dbReference type="ChEBI" id="CHEBI:57595"/>
        <dbReference type="ChEBI" id="CHEBI:57699"/>
        <dbReference type="ChEBI" id="CHEBI:57945"/>
        <dbReference type="EC" id="1.1.1.23"/>
    </reaction>
</comment>
<comment type="cofactor">
    <cofactor evidence="1">
        <name>Zn(2+)</name>
        <dbReference type="ChEBI" id="CHEBI:29105"/>
    </cofactor>
    <text evidence="1">Binds 1 zinc ion per subunit.</text>
</comment>
<comment type="pathway">
    <text evidence="1">Amino-acid biosynthesis; L-histidine biosynthesis; L-histidine from 5-phospho-alpha-D-ribose 1-diphosphate: step 9/9.</text>
</comment>
<comment type="similarity">
    <text evidence="1">Belongs to the histidinol dehydrogenase family.</text>
</comment>
<name>HISX_PSE14</name>
<keyword id="KW-0028">Amino-acid biosynthesis</keyword>
<keyword id="KW-0368">Histidine biosynthesis</keyword>
<keyword id="KW-0479">Metal-binding</keyword>
<keyword id="KW-0520">NAD</keyword>
<keyword id="KW-0560">Oxidoreductase</keyword>
<keyword id="KW-0862">Zinc</keyword>
<sequence length="448" mass="48160">MTTPTAIRRLDAADPDFARHLDHLLSWESVSDDSVNQRVLDIIKAVRERGDEALVEFTQKFDGLQVASMADLILPRERLELALTRITPVQREALEKAAERVRSYHEKQKQDSWSYTEADGTVLGQKVTPLDRAGLYVPGGKASYPSSVLMNAIPAKVAGVTEVVMVVPTPRGEINELVLAAACIAGVDRVFTIGGAQAVAALAYGTESVPKVDKVVGPGNIYVATAKRHVFGQVGIDMIAGPSEILVVCDGQTDPDWIAMDLFSQAEHDEDAQAILVSPDADFLDKVAASITRLLPTMERAAIVETSINGRGALIKVADMAQAIEVANRIAPEHLELSVADPEAWLPQIRHAGAIFMGRHTSEALGDYCAGPNHVLPTSGTARFSSPLGVYDFQKRSSIIYCSPQGASELGKTASVLARGESLSGHARSAEYRITDPDWKAGNTEDGK</sequence>
<dbReference type="EC" id="1.1.1.23" evidence="1"/>
<dbReference type="EMBL" id="CP000058">
    <property type="protein sequence ID" value="AAZ37769.1"/>
    <property type="molecule type" value="Genomic_DNA"/>
</dbReference>
<dbReference type="RefSeq" id="WP_004666188.1">
    <property type="nucleotide sequence ID" value="NC_005773.3"/>
</dbReference>
<dbReference type="SMR" id="Q48EC9"/>
<dbReference type="GeneID" id="61871714"/>
<dbReference type="KEGG" id="psp:PSPPH_4137"/>
<dbReference type="eggNOG" id="COG0141">
    <property type="taxonomic scope" value="Bacteria"/>
</dbReference>
<dbReference type="HOGENOM" id="CLU_006732_3_3_6"/>
<dbReference type="UniPathway" id="UPA00031">
    <property type="reaction ID" value="UER00014"/>
</dbReference>
<dbReference type="Proteomes" id="UP000000551">
    <property type="component" value="Chromosome"/>
</dbReference>
<dbReference type="GO" id="GO:0005829">
    <property type="term" value="C:cytosol"/>
    <property type="evidence" value="ECO:0007669"/>
    <property type="project" value="TreeGrafter"/>
</dbReference>
<dbReference type="GO" id="GO:0004399">
    <property type="term" value="F:histidinol dehydrogenase activity"/>
    <property type="evidence" value="ECO:0007669"/>
    <property type="project" value="UniProtKB-UniRule"/>
</dbReference>
<dbReference type="GO" id="GO:0051287">
    <property type="term" value="F:NAD binding"/>
    <property type="evidence" value="ECO:0007669"/>
    <property type="project" value="InterPro"/>
</dbReference>
<dbReference type="GO" id="GO:0008270">
    <property type="term" value="F:zinc ion binding"/>
    <property type="evidence" value="ECO:0007669"/>
    <property type="project" value="UniProtKB-UniRule"/>
</dbReference>
<dbReference type="GO" id="GO:0000105">
    <property type="term" value="P:L-histidine biosynthetic process"/>
    <property type="evidence" value="ECO:0007669"/>
    <property type="project" value="UniProtKB-UniRule"/>
</dbReference>
<dbReference type="CDD" id="cd06572">
    <property type="entry name" value="Histidinol_dh"/>
    <property type="match status" value="1"/>
</dbReference>
<dbReference type="FunFam" id="3.40.50.1980:FF:000004">
    <property type="entry name" value="Histidinol dehydrogenase"/>
    <property type="match status" value="1"/>
</dbReference>
<dbReference type="FunFam" id="3.40.50.1980:FF:000010">
    <property type="entry name" value="Histidinol dehydrogenase"/>
    <property type="match status" value="1"/>
</dbReference>
<dbReference type="Gene3D" id="1.20.5.1300">
    <property type="match status" value="1"/>
</dbReference>
<dbReference type="Gene3D" id="3.40.50.1980">
    <property type="entry name" value="Nitrogenase molybdenum iron protein domain"/>
    <property type="match status" value="2"/>
</dbReference>
<dbReference type="HAMAP" id="MF_01024">
    <property type="entry name" value="HisD"/>
    <property type="match status" value="1"/>
</dbReference>
<dbReference type="InterPro" id="IPR016161">
    <property type="entry name" value="Ald_DH/histidinol_DH"/>
</dbReference>
<dbReference type="InterPro" id="IPR001692">
    <property type="entry name" value="Histidinol_DH_CS"/>
</dbReference>
<dbReference type="InterPro" id="IPR022695">
    <property type="entry name" value="Histidinol_DH_monofunct"/>
</dbReference>
<dbReference type="InterPro" id="IPR012131">
    <property type="entry name" value="Hstdl_DH"/>
</dbReference>
<dbReference type="NCBIfam" id="TIGR00069">
    <property type="entry name" value="hisD"/>
    <property type="match status" value="1"/>
</dbReference>
<dbReference type="PANTHER" id="PTHR21256:SF2">
    <property type="entry name" value="HISTIDINE BIOSYNTHESIS TRIFUNCTIONAL PROTEIN"/>
    <property type="match status" value="1"/>
</dbReference>
<dbReference type="PANTHER" id="PTHR21256">
    <property type="entry name" value="HISTIDINOL DEHYDROGENASE HDH"/>
    <property type="match status" value="1"/>
</dbReference>
<dbReference type="Pfam" id="PF00815">
    <property type="entry name" value="Histidinol_dh"/>
    <property type="match status" value="1"/>
</dbReference>
<dbReference type="PIRSF" id="PIRSF000099">
    <property type="entry name" value="Histidinol_dh"/>
    <property type="match status" value="1"/>
</dbReference>
<dbReference type="PRINTS" id="PR00083">
    <property type="entry name" value="HOLDHDRGNASE"/>
</dbReference>
<dbReference type="SUPFAM" id="SSF53720">
    <property type="entry name" value="ALDH-like"/>
    <property type="match status" value="1"/>
</dbReference>
<dbReference type="PROSITE" id="PS00611">
    <property type="entry name" value="HISOL_DEHYDROGENASE"/>
    <property type="match status" value="1"/>
</dbReference>
<feature type="chain" id="PRO_0000135822" description="Histidinol dehydrogenase">
    <location>
        <begin position="1"/>
        <end position="448"/>
    </location>
</feature>
<feature type="active site" description="Proton acceptor" evidence="1">
    <location>
        <position position="333"/>
    </location>
</feature>
<feature type="active site" description="Proton acceptor" evidence="1">
    <location>
        <position position="334"/>
    </location>
</feature>
<feature type="binding site" evidence="1">
    <location>
        <position position="136"/>
    </location>
    <ligand>
        <name>NAD(+)</name>
        <dbReference type="ChEBI" id="CHEBI:57540"/>
    </ligand>
</feature>
<feature type="binding site" evidence="1">
    <location>
        <position position="197"/>
    </location>
    <ligand>
        <name>NAD(+)</name>
        <dbReference type="ChEBI" id="CHEBI:57540"/>
    </ligand>
</feature>
<feature type="binding site" evidence="1">
    <location>
        <position position="220"/>
    </location>
    <ligand>
        <name>NAD(+)</name>
        <dbReference type="ChEBI" id="CHEBI:57540"/>
    </ligand>
</feature>
<feature type="binding site" evidence="1">
    <location>
        <position position="243"/>
    </location>
    <ligand>
        <name>substrate</name>
    </ligand>
</feature>
<feature type="binding site" evidence="1">
    <location>
        <position position="265"/>
    </location>
    <ligand>
        <name>substrate</name>
    </ligand>
</feature>
<feature type="binding site" evidence="1">
    <location>
        <position position="265"/>
    </location>
    <ligand>
        <name>Zn(2+)</name>
        <dbReference type="ChEBI" id="CHEBI:29105"/>
    </ligand>
</feature>
<feature type="binding site" evidence="1">
    <location>
        <position position="268"/>
    </location>
    <ligand>
        <name>substrate</name>
    </ligand>
</feature>
<feature type="binding site" evidence="1">
    <location>
        <position position="268"/>
    </location>
    <ligand>
        <name>Zn(2+)</name>
        <dbReference type="ChEBI" id="CHEBI:29105"/>
    </ligand>
</feature>
<feature type="binding site" evidence="1">
    <location>
        <position position="334"/>
    </location>
    <ligand>
        <name>substrate</name>
    </ligand>
</feature>
<feature type="binding site" evidence="1">
    <location>
        <position position="367"/>
    </location>
    <ligand>
        <name>substrate</name>
    </ligand>
</feature>
<feature type="binding site" evidence="1">
    <location>
        <position position="367"/>
    </location>
    <ligand>
        <name>Zn(2+)</name>
        <dbReference type="ChEBI" id="CHEBI:29105"/>
    </ligand>
</feature>
<feature type="binding site" evidence="1">
    <location>
        <position position="421"/>
    </location>
    <ligand>
        <name>substrate</name>
    </ligand>
</feature>
<feature type="binding site" evidence="1">
    <location>
        <position position="426"/>
    </location>
    <ligand>
        <name>substrate</name>
    </ligand>
</feature>
<feature type="binding site" evidence="1">
    <location>
        <position position="426"/>
    </location>
    <ligand>
        <name>Zn(2+)</name>
        <dbReference type="ChEBI" id="CHEBI:29105"/>
    </ligand>
</feature>
<proteinExistence type="inferred from homology"/>
<organism>
    <name type="scientific">Pseudomonas savastanoi pv. phaseolicola (strain 1448A / Race 6)</name>
    <name type="common">Pseudomonas syringae pv. phaseolicola (strain 1448A / Race 6)</name>
    <dbReference type="NCBI Taxonomy" id="264730"/>
    <lineage>
        <taxon>Bacteria</taxon>
        <taxon>Pseudomonadati</taxon>
        <taxon>Pseudomonadota</taxon>
        <taxon>Gammaproteobacteria</taxon>
        <taxon>Pseudomonadales</taxon>
        <taxon>Pseudomonadaceae</taxon>
        <taxon>Pseudomonas</taxon>
    </lineage>
</organism>
<gene>
    <name evidence="1" type="primary">hisD</name>
    <name type="ordered locus">PSPPH_4137</name>
</gene>
<evidence type="ECO:0000255" key="1">
    <source>
        <dbReference type="HAMAP-Rule" id="MF_01024"/>
    </source>
</evidence>
<protein>
    <recommendedName>
        <fullName evidence="1">Histidinol dehydrogenase</fullName>
        <shortName evidence="1">HDH</shortName>
        <ecNumber evidence="1">1.1.1.23</ecNumber>
    </recommendedName>
</protein>